<organism>
    <name type="scientific">Saccharomyces cerevisiae (strain ATCC 204508 / S288c)</name>
    <name type="common">Baker's yeast</name>
    <dbReference type="NCBI Taxonomy" id="559292"/>
    <lineage>
        <taxon>Eukaryota</taxon>
        <taxon>Fungi</taxon>
        <taxon>Dikarya</taxon>
        <taxon>Ascomycota</taxon>
        <taxon>Saccharomycotina</taxon>
        <taxon>Saccharomycetes</taxon>
        <taxon>Saccharomycetales</taxon>
        <taxon>Saccharomycetaceae</taxon>
        <taxon>Saccharomyces</taxon>
    </lineage>
</organism>
<name>ECM32_YEAST</name>
<evidence type="ECO:0000255" key="1"/>
<evidence type="ECO:0000256" key="2">
    <source>
        <dbReference type="SAM" id="MobiDB-lite"/>
    </source>
</evidence>
<evidence type="ECO:0000269" key="3">
    <source>
    </source>
</evidence>
<evidence type="ECO:0000269" key="4">
    <source>
    </source>
</evidence>
<evidence type="ECO:0000269" key="5">
    <source>
    </source>
</evidence>
<evidence type="ECO:0000269" key="6">
    <source>
    </source>
</evidence>
<evidence type="ECO:0000305" key="7"/>
<evidence type="ECO:0007744" key="8">
    <source>
    </source>
</evidence>
<evidence type="ECO:0007744" key="9">
    <source>
    </source>
</evidence>
<reference key="1">
    <citation type="journal article" date="1997" name="Nature">
        <title>The nucleotide sequence of Saccharomyces cerevisiae chromosome V.</title>
        <authorList>
            <person name="Dietrich F.S."/>
            <person name="Mulligan J.T."/>
            <person name="Hennessy K.M."/>
            <person name="Yelton M.A."/>
            <person name="Allen E."/>
            <person name="Araujo R."/>
            <person name="Aviles E."/>
            <person name="Berno A."/>
            <person name="Brennan T."/>
            <person name="Carpenter J."/>
            <person name="Chen E."/>
            <person name="Cherry J.M."/>
            <person name="Chung E."/>
            <person name="Duncan M."/>
            <person name="Guzman E."/>
            <person name="Hartzell G."/>
            <person name="Hunicke-Smith S."/>
            <person name="Hyman R.W."/>
            <person name="Kayser A."/>
            <person name="Komp C."/>
            <person name="Lashkari D."/>
            <person name="Lew H."/>
            <person name="Lin D."/>
            <person name="Mosedale D."/>
            <person name="Nakahara K."/>
            <person name="Namath A."/>
            <person name="Norgren R."/>
            <person name="Oefner P."/>
            <person name="Oh C."/>
            <person name="Petel F.X."/>
            <person name="Roberts D."/>
            <person name="Sehl P."/>
            <person name="Schramm S."/>
            <person name="Shogren T."/>
            <person name="Smith V."/>
            <person name="Taylor P."/>
            <person name="Wei Y."/>
            <person name="Botstein D."/>
            <person name="Davis R.W."/>
        </authorList>
    </citation>
    <scope>NUCLEOTIDE SEQUENCE [LARGE SCALE GENOMIC DNA]</scope>
    <source>
        <strain>ATCC 204508 / S288c</strain>
    </source>
</reference>
<reference key="2">
    <citation type="journal article" date="2014" name="G3 (Bethesda)">
        <title>The reference genome sequence of Saccharomyces cerevisiae: Then and now.</title>
        <authorList>
            <person name="Engel S.R."/>
            <person name="Dietrich F.S."/>
            <person name="Fisk D.G."/>
            <person name="Binkley G."/>
            <person name="Balakrishnan R."/>
            <person name="Costanzo M.C."/>
            <person name="Dwight S.S."/>
            <person name="Hitz B.C."/>
            <person name="Karra K."/>
            <person name="Nash R.S."/>
            <person name="Weng S."/>
            <person name="Wong E.D."/>
            <person name="Lloyd P."/>
            <person name="Skrzypek M.S."/>
            <person name="Miyasato S.R."/>
            <person name="Simison M."/>
            <person name="Cherry J.M."/>
        </authorList>
    </citation>
    <scope>GENOME REANNOTATION</scope>
    <source>
        <strain>ATCC 204508 / S288c</strain>
    </source>
</reference>
<reference key="3">
    <citation type="journal article" date="1999" name="J. Biochem.">
        <title>DNA helicase III of Saccharomyces cerevisiae, encoded by YER176w (HEL1), highly unwinds covalently closed, circular DNA in the presence of a DNA topoisomerase and yRF-A.</title>
        <authorList>
            <person name="Kamimura Y.I."/>
            <person name="Kawasaki Y."/>
            <person name="Ohara T."/>
            <person name="Sugino A."/>
        </authorList>
    </citation>
    <scope>PROTEIN SEQUENCE OF 28-46; 339-341; 472-510; 752-763; 778-780; 898-904; 993-1007 AND 1083-1090</scope>
    <scope>FUNCTION</scope>
</reference>
<reference key="4">
    <citation type="journal article" date="1995" name="Biochem. Biophys. Res. Commun.">
        <title>Biochemical and genetic characterization of a replication protein A dependent DNA helicase from the yeast, Saccharomyces cerevisiae.</title>
        <authorList>
            <person name="Biswas E.E."/>
            <person name="Chen P.H."/>
            <person name="Leszyk J."/>
            <person name="Biswas S.B."/>
        </authorList>
    </citation>
    <scope>PROTEIN SEQUENCE OF 277-282 AND 624-642</scope>
    <scope>PRELIMINARY CHARACTERIZATION</scope>
</reference>
<reference key="5">
    <citation type="journal article" date="1997" name="Genetics">
        <title>Large scale identification of genes involved in cell surface biosynthesis and architecture in Saccharomyces cerevisiae.</title>
        <authorList>
            <person name="Lussier M."/>
            <person name="White A.-M."/>
            <person name="Sheraton J."/>
            <person name="di Paolo T."/>
            <person name="Treadwell J."/>
            <person name="Southard S.B."/>
            <person name="Horenstein C.I."/>
            <person name="Chen-Weiner J."/>
            <person name="Ram A.F.J."/>
            <person name="Kapteyn J.C."/>
            <person name="Roemer T.W."/>
            <person name="Vo D.H."/>
            <person name="Bondoc D.C."/>
            <person name="Hall J."/>
            <person name="Zhong W.-W."/>
            <person name="Sdicu A.-M."/>
            <person name="Davies J."/>
            <person name="Klis F.M."/>
            <person name="Robbins P.W."/>
            <person name="Bussey H."/>
        </authorList>
    </citation>
    <scope>IDENTIFICATION</scope>
</reference>
<reference key="6">
    <citation type="journal article" date="2000" name="RNA">
        <title>Mtt1 is a Upf1-like helicase that interacts with the translation termination factors and whose overexpression can modulate termination efficiency.</title>
        <authorList>
            <person name="Czaplinski K."/>
            <person name="Majlesi N."/>
            <person name="Banerjee T."/>
            <person name="Peltz S.W."/>
        </authorList>
    </citation>
    <scope>FUNCTION</scope>
    <scope>INTERACTION WITH SUP35 AND SUP45</scope>
    <scope>SUBCELLULAR LOCATION</scope>
    <scope>DISRUPTION PHENOTYPE</scope>
</reference>
<reference key="7">
    <citation type="journal article" date="2003" name="Nature">
        <title>Global analysis of protein localization in budding yeast.</title>
        <authorList>
            <person name="Huh W.-K."/>
            <person name="Falvo J.V."/>
            <person name="Gerke L.C."/>
            <person name="Carroll A.S."/>
            <person name="Howson R.W."/>
            <person name="Weissman J.S."/>
            <person name="O'Shea E.K."/>
        </authorList>
    </citation>
    <scope>SUBCELLULAR LOCATION [LARGE SCALE ANALYSIS]</scope>
</reference>
<reference key="8">
    <citation type="journal article" date="2003" name="Nature">
        <title>Global analysis of protein expression in yeast.</title>
        <authorList>
            <person name="Ghaemmaghami S."/>
            <person name="Huh W.-K."/>
            <person name="Bower K."/>
            <person name="Howson R.W."/>
            <person name="Belle A."/>
            <person name="Dephoure N."/>
            <person name="O'Shea E.K."/>
            <person name="Weissman J.S."/>
        </authorList>
    </citation>
    <scope>LEVEL OF PROTEIN EXPRESSION [LARGE SCALE ANALYSIS]</scope>
</reference>
<reference key="9">
    <citation type="journal article" date="2007" name="J. Proteome Res.">
        <title>Large-scale phosphorylation analysis of alpha-factor-arrested Saccharomyces cerevisiae.</title>
        <authorList>
            <person name="Li X."/>
            <person name="Gerber S.A."/>
            <person name="Rudner A.D."/>
            <person name="Beausoleil S.A."/>
            <person name="Haas W."/>
            <person name="Villen J."/>
            <person name="Elias J.E."/>
            <person name="Gygi S.P."/>
        </authorList>
    </citation>
    <scope>PHOSPHORYLATION [LARGE SCALE ANALYSIS] AT SER-392</scope>
    <scope>IDENTIFICATION BY MASS SPECTROMETRY [LARGE SCALE ANALYSIS]</scope>
    <source>
        <strain>ADR376</strain>
    </source>
</reference>
<reference key="10">
    <citation type="journal article" date="2008" name="Mol. Cell. Proteomics">
        <title>A multidimensional chromatography technology for in-depth phosphoproteome analysis.</title>
        <authorList>
            <person name="Albuquerque C.P."/>
            <person name="Smolka M.B."/>
            <person name="Payne S.H."/>
            <person name="Bafna V."/>
            <person name="Eng J."/>
            <person name="Zhou H."/>
        </authorList>
    </citation>
    <scope>PHOSPHORYLATION [LARGE SCALE ANALYSIS] AT SER-227; SER-392 AND THR-465</scope>
    <scope>IDENTIFICATION BY MASS SPECTROMETRY [LARGE SCALE ANALYSIS]</scope>
</reference>
<reference key="11">
    <citation type="journal article" date="2009" name="Science">
        <title>Global analysis of Cdk1 substrate phosphorylation sites provides insights into evolution.</title>
        <authorList>
            <person name="Holt L.J."/>
            <person name="Tuch B.B."/>
            <person name="Villen J."/>
            <person name="Johnson A.D."/>
            <person name="Gygi S.P."/>
            <person name="Morgan D.O."/>
        </authorList>
    </citation>
    <scope>IDENTIFICATION BY MASS SPECTROMETRY [LARGE SCALE ANALYSIS]</scope>
</reference>
<feature type="chain" id="PRO_0000080725" description="Putative ATP-dependent RNA helicase ECM32">
    <location>
        <begin position="1"/>
        <end position="1121"/>
    </location>
</feature>
<feature type="region of interest" description="Disordered" evidence="2">
    <location>
        <begin position="157"/>
        <end position="187"/>
    </location>
</feature>
<feature type="region of interest" description="Disordered" evidence="2">
    <location>
        <begin position="233"/>
        <end position="452"/>
    </location>
</feature>
<feature type="compositionally biased region" description="Basic residues" evidence="2">
    <location>
        <begin position="160"/>
        <end position="184"/>
    </location>
</feature>
<feature type="compositionally biased region" description="Basic residues" evidence="2">
    <location>
        <begin position="251"/>
        <end position="263"/>
    </location>
</feature>
<feature type="compositionally biased region" description="Polar residues" evidence="2">
    <location>
        <begin position="278"/>
        <end position="287"/>
    </location>
</feature>
<feature type="compositionally biased region" description="Basic and acidic residues" evidence="2">
    <location>
        <begin position="307"/>
        <end position="316"/>
    </location>
</feature>
<feature type="compositionally biased region" description="Low complexity" evidence="2">
    <location>
        <begin position="323"/>
        <end position="336"/>
    </location>
</feature>
<feature type="compositionally biased region" description="Basic and acidic residues" evidence="2">
    <location>
        <begin position="342"/>
        <end position="363"/>
    </location>
</feature>
<feature type="compositionally biased region" description="Polar residues" evidence="2">
    <location>
        <begin position="376"/>
        <end position="413"/>
    </location>
</feature>
<feature type="compositionally biased region" description="Basic and acidic residues" evidence="2">
    <location>
        <begin position="426"/>
        <end position="452"/>
    </location>
</feature>
<feature type="binding site" evidence="1">
    <location>
        <begin position="670"/>
        <end position="677"/>
    </location>
    <ligand>
        <name>ATP</name>
        <dbReference type="ChEBI" id="CHEBI:30616"/>
    </ligand>
</feature>
<feature type="modified residue" description="Phosphoserine" evidence="9">
    <location>
        <position position="227"/>
    </location>
</feature>
<feature type="modified residue" description="Phosphoserine" evidence="8 9">
    <location>
        <position position="392"/>
    </location>
</feature>
<feature type="modified residue" description="Phosphothreonine" evidence="9">
    <location>
        <position position="465"/>
    </location>
</feature>
<sequence length="1121" mass="126970">MDFQCRTCSQAYDAEQMMKHLSSTRHKTVFDTSNDEDICCEECQDKNIHQLQIIRFGGEDMVLLCNSCFRKEYSETERPSTSYSLQNGSILKFWEKYVKVRECCCDECGEESNLNANRNGEVLCDKCLPKSNRAKDFVSEKSGRFLYIYLGLNETQNSTRKPRKKGGRRVGRGKKGRKGAKIKKEKKETFEAKISRIAYEVKKENSTIQSSSSSNLRNFKGFKAVESDPVVAAKVSKSETSRSNPGPSNRNKGKGNKANHKKNSGNGIGKEKERKTNIRNNVRNSQPIPEDRKNTNSHVTTNSGGKGKNESVDKHQLPQPKALNGNGSGSTNTTGLKKGKKDHAGQKTKGNDKTGNKNPREAKLNSAGRKNALGKKSNNQPNKGTSRWTIGSDTESSREPSISPNENTTSITKSRNRNKKASKPTLNEKSKTTTMPKKLETKNQEKNNGKTKDGKLIYEEGEPLTRYNTFKSTLSYPDLNTYLNDYSFALFLEQKLENEFVQNFNILWPRNEKDTAFIINVEKNNNSELEKLLPANLLALGRPAFNERQPFFFCTQDEQKVWYIFIKELSIQRGKYVLLVELFSWNNLSLPTKNGSSQFKLLPTSAQTSRILFAMTRITNPKFIDLLLGQKPIKEIYFDNRLKFSSDKLNRSQKTAVEHVLNNSITILQGPPGTGKTSTIEEIIIQVIERFHAFPILCVAASNIAIDNIAEKIMENRPQIKILRILSKKKEQQYSDDHPLGEICLHNIVYKNLSPDMQVVANKTRRGEMISKSEDTKFYKEKNRVTNKVVSQSQIIFTTNIAAGGRELKVIKECPVVIMDEATQSSEASTLVPLSLPGIRNFVFVGDEKQLSSFSNIPQLETSLFERVLSNGTYKNPLMLDTQYRMHPKISEFPIKKIYNGELKDGVTDEQKAWPGVQHPLFFYQCDLGPESRVRSTQRDIVGFTYENKHECVEIVKIIQILMLDKKVPLEEIGVITPYSAQRDLLSDILTKNVVINPKQISMQQEYDEIELFNAAGSQGTAGSLQNNVINIINGLHVATVDSFQGHEKSFIIFSCVRNNTENKIGFLRDKRRLNVALTRAKHGLIVVGNKNVLRKGDPLWKDYITYLEEQEVIFTDLTAY</sequence>
<dbReference type="EC" id="3.6.4.13"/>
<dbReference type="EMBL" id="U18922">
    <property type="protein sequence ID" value="AAB64703.1"/>
    <property type="molecule type" value="Genomic_DNA"/>
</dbReference>
<dbReference type="EMBL" id="BK006939">
    <property type="protein sequence ID" value="DAA07839.1"/>
    <property type="molecule type" value="Genomic_DNA"/>
</dbReference>
<dbReference type="PIR" id="S30862">
    <property type="entry name" value="S30862"/>
</dbReference>
<dbReference type="RefSeq" id="NP_011103.1">
    <property type="nucleotide sequence ID" value="NM_001179066.1"/>
</dbReference>
<dbReference type="SMR" id="P32644"/>
<dbReference type="BioGRID" id="36929">
    <property type="interactions" value="116"/>
</dbReference>
<dbReference type="DIP" id="DIP-5404N"/>
<dbReference type="FunCoup" id="P32644">
    <property type="interactions" value="63"/>
</dbReference>
<dbReference type="IntAct" id="P32644">
    <property type="interactions" value="18"/>
</dbReference>
<dbReference type="STRING" id="4932.YER176W"/>
<dbReference type="iPTMnet" id="P32644"/>
<dbReference type="PaxDb" id="4932-YER176W"/>
<dbReference type="PeptideAtlas" id="P32644"/>
<dbReference type="EnsemblFungi" id="YER176W_mRNA">
    <property type="protein sequence ID" value="YER176W"/>
    <property type="gene ID" value="YER176W"/>
</dbReference>
<dbReference type="GeneID" id="856923"/>
<dbReference type="KEGG" id="sce:YER176W"/>
<dbReference type="AGR" id="SGD:S000000978"/>
<dbReference type="SGD" id="S000000978">
    <property type="gene designation" value="ECM32"/>
</dbReference>
<dbReference type="VEuPathDB" id="FungiDB:YER176W"/>
<dbReference type="eggNOG" id="KOG1802">
    <property type="taxonomic scope" value="Eukaryota"/>
</dbReference>
<dbReference type="HOGENOM" id="CLU_010015_0_0_1"/>
<dbReference type="InParanoid" id="P32644"/>
<dbReference type="OMA" id="HPLGKIC"/>
<dbReference type="OrthoDB" id="6513042at2759"/>
<dbReference type="BioCyc" id="YEAST:G3O-30335-MONOMER"/>
<dbReference type="BioGRID-ORCS" id="856923">
    <property type="hits" value="0 hits in 10 CRISPR screens"/>
</dbReference>
<dbReference type="CD-CODE" id="E03F929F">
    <property type="entry name" value="Stress granule"/>
</dbReference>
<dbReference type="PRO" id="PR:P32644"/>
<dbReference type="Proteomes" id="UP000002311">
    <property type="component" value="Chromosome V"/>
</dbReference>
<dbReference type="RNAct" id="P32644">
    <property type="molecule type" value="protein"/>
</dbReference>
<dbReference type="GO" id="GO:0005737">
    <property type="term" value="C:cytoplasm"/>
    <property type="evidence" value="ECO:0000318"/>
    <property type="project" value="GO_Central"/>
</dbReference>
<dbReference type="GO" id="GO:0010494">
    <property type="term" value="C:cytoplasmic stress granule"/>
    <property type="evidence" value="ECO:0000314"/>
    <property type="project" value="SGD"/>
</dbReference>
<dbReference type="GO" id="GO:0005524">
    <property type="term" value="F:ATP binding"/>
    <property type="evidence" value="ECO:0007669"/>
    <property type="project" value="UniProtKB-KW"/>
</dbReference>
<dbReference type="GO" id="GO:0016887">
    <property type="term" value="F:ATP hydrolysis activity"/>
    <property type="evidence" value="ECO:0007669"/>
    <property type="project" value="RHEA"/>
</dbReference>
<dbReference type="GO" id="GO:0003677">
    <property type="term" value="F:DNA binding"/>
    <property type="evidence" value="ECO:0007669"/>
    <property type="project" value="UniProtKB-KW"/>
</dbReference>
<dbReference type="GO" id="GO:0003678">
    <property type="term" value="F:DNA helicase activity"/>
    <property type="evidence" value="ECO:0000314"/>
    <property type="project" value="SGD"/>
</dbReference>
<dbReference type="GO" id="GO:0003729">
    <property type="term" value="F:mRNA binding"/>
    <property type="evidence" value="ECO:0007005"/>
    <property type="project" value="SGD"/>
</dbReference>
<dbReference type="GO" id="GO:0003723">
    <property type="term" value="F:RNA binding"/>
    <property type="evidence" value="ECO:0000318"/>
    <property type="project" value="GO_Central"/>
</dbReference>
<dbReference type="GO" id="GO:0003724">
    <property type="term" value="F:RNA helicase activity"/>
    <property type="evidence" value="ECO:0000318"/>
    <property type="project" value="GO_Central"/>
</dbReference>
<dbReference type="GO" id="GO:0000184">
    <property type="term" value="P:nuclear-transcribed mRNA catabolic process, nonsense-mediated decay"/>
    <property type="evidence" value="ECO:0000318"/>
    <property type="project" value="GO_Central"/>
</dbReference>
<dbReference type="GO" id="GO:0006449">
    <property type="term" value="P:regulation of translational termination"/>
    <property type="evidence" value="ECO:0000315"/>
    <property type="project" value="SGD"/>
</dbReference>
<dbReference type="CDD" id="cd18808">
    <property type="entry name" value="SF1_C_Upf1"/>
    <property type="match status" value="1"/>
</dbReference>
<dbReference type="FunFam" id="3.40.50.300:FF:002019">
    <property type="entry name" value="DNA helicase I"/>
    <property type="match status" value="1"/>
</dbReference>
<dbReference type="FunFam" id="3.40.50.300:FF:001247">
    <property type="entry name" value="Erythrocyte membrane-associated antigen"/>
    <property type="match status" value="1"/>
</dbReference>
<dbReference type="Gene3D" id="3.40.50.300">
    <property type="entry name" value="P-loop containing nucleotide triphosphate hydrolases"/>
    <property type="match status" value="2"/>
</dbReference>
<dbReference type="InterPro" id="IPR045055">
    <property type="entry name" value="DNA2/NAM7-like"/>
</dbReference>
<dbReference type="InterPro" id="IPR041679">
    <property type="entry name" value="DNA2/NAM7-like_C"/>
</dbReference>
<dbReference type="InterPro" id="IPR041677">
    <property type="entry name" value="DNA2/NAM7_AAA_11"/>
</dbReference>
<dbReference type="InterPro" id="IPR027417">
    <property type="entry name" value="P-loop_NTPase"/>
</dbReference>
<dbReference type="InterPro" id="IPR047187">
    <property type="entry name" value="SF1_C_Upf1"/>
</dbReference>
<dbReference type="PANTHER" id="PTHR10887:SF317">
    <property type="entry name" value="ATP-DEPENDENT RNA HELICASE ECM32-RELATED"/>
    <property type="match status" value="1"/>
</dbReference>
<dbReference type="PANTHER" id="PTHR10887">
    <property type="entry name" value="DNA2/NAM7 HELICASE FAMILY"/>
    <property type="match status" value="1"/>
</dbReference>
<dbReference type="Pfam" id="PF13086">
    <property type="entry name" value="AAA_11"/>
    <property type="match status" value="2"/>
</dbReference>
<dbReference type="Pfam" id="PF13087">
    <property type="entry name" value="AAA_12"/>
    <property type="match status" value="1"/>
</dbReference>
<dbReference type="SUPFAM" id="SSF52540">
    <property type="entry name" value="P-loop containing nucleoside triphosphate hydrolases"/>
    <property type="match status" value="1"/>
</dbReference>
<keyword id="KW-0067">ATP-binding</keyword>
<keyword id="KW-0963">Cytoplasm</keyword>
<keyword id="KW-0903">Direct protein sequencing</keyword>
<keyword id="KW-0238">DNA-binding</keyword>
<keyword id="KW-0347">Helicase</keyword>
<keyword id="KW-0378">Hydrolase</keyword>
<keyword id="KW-0547">Nucleotide-binding</keyword>
<keyword id="KW-0597">Phosphoprotein</keyword>
<keyword id="KW-1185">Reference proteome</keyword>
<keyword id="KW-0694">RNA-binding</keyword>
<gene>
    <name type="primary">ECM32</name>
    <name type="synonym">HEL1</name>
    <name type="synonym">MTT1</name>
    <name type="ordered locus">YER176W</name>
    <name type="ORF">SYGP-ORF61</name>
</gene>
<comment type="function">
    <text evidence="3 6">Probable RNA helicase, which may be involved in modulation of the translation termination process. Probably unwinds double-stranded RNA. In vitro, unwinds covalently closed, circular DNA in the presence of a DNA topoisomerase TOP1 and replication factor-A protein RFA1.</text>
</comment>
<comment type="catalytic activity">
    <reaction>
        <text>ATP + H2O = ADP + phosphate + H(+)</text>
        <dbReference type="Rhea" id="RHEA:13065"/>
        <dbReference type="ChEBI" id="CHEBI:15377"/>
        <dbReference type="ChEBI" id="CHEBI:15378"/>
        <dbReference type="ChEBI" id="CHEBI:30616"/>
        <dbReference type="ChEBI" id="CHEBI:43474"/>
        <dbReference type="ChEBI" id="CHEBI:456216"/>
        <dbReference type="EC" id="3.6.4.13"/>
    </reaction>
</comment>
<comment type="subunit">
    <text evidence="3">Interacts with the peptidyl release factors SUP35 and weakly with SUP45.</text>
</comment>
<comment type="interaction">
    <interactant intactId="EBI-22223">
        <id>P32644</id>
    </interactant>
    <interactant intactId="EBI-6540">
        <id>P05453</id>
        <label>SUP35</label>
    </interactant>
    <organismsDiffer>false</organismsDiffer>
    <experiments>3</experiments>
</comment>
<comment type="subcellular location">
    <subcellularLocation>
        <location evidence="3 4">Cytoplasm</location>
    </subcellularLocation>
    <text>Associated with polyribosomes.</text>
</comment>
<comment type="disruption phenotype">
    <text evidence="3">Sensitivity to drugs that affect translation fidelity. Overexpression results in a nonsense suppression phenotype.</text>
</comment>
<comment type="miscellaneous">
    <text evidence="5">Present with 736 molecules/cell in log phase SD medium.</text>
</comment>
<comment type="similarity">
    <text evidence="7">Belongs to the DNA2/NAM7 helicase family.</text>
</comment>
<comment type="caution">
    <text evidence="7">ECM32 was originally identified as a DNA helicase and as component of DNA polymerase I.</text>
</comment>
<protein>
    <recommendedName>
        <fullName>Putative ATP-dependent RNA helicase ECM32</fullName>
        <ecNumber>3.6.4.13</ecNumber>
    </recommendedName>
    <alternativeName>
        <fullName>DNA helicase B</fullName>
        <shortName>Hcs B</shortName>
    </alternativeName>
    <alternativeName>
        <fullName>DNA helicase III</fullName>
    </alternativeName>
    <alternativeName>
        <fullName>Extracellular mutant protein 32</fullName>
    </alternativeName>
    <alternativeName>
        <fullName>Helicase 1</fullName>
        <shortName>scHelI</shortName>
    </alternativeName>
    <alternativeName>
        <fullName>Modulator of translation termination protein 1</fullName>
    </alternativeName>
</protein>
<proteinExistence type="evidence at protein level"/>
<accession>P32644</accession>
<accession>D3DM85</accession>